<gene>
    <name evidence="6" type="primary">ndoC</name>
    <name evidence="8" type="synonym">nahAD</name>
</gene>
<feature type="chain" id="PRO_0000085072" description="Naphthalene 1,2-dioxygenase system, small oxygenase component">
    <location>
        <begin position="1"/>
        <end position="194"/>
    </location>
</feature>
<feature type="sequence variant" description="In strain: G7.">
    <original>E</original>
    <variation>Q</variation>
    <location>
        <position position="17"/>
    </location>
</feature>
<feature type="sequence variant" description="In strain: G7.">
    <original>I</original>
    <variation>F</variation>
    <location>
        <position position="19"/>
    </location>
</feature>
<feature type="sequence variant" description="In strain: G7.">
    <original>S</original>
    <variation>A</variation>
    <location>
        <position position="28"/>
    </location>
</feature>
<feature type="sequence variant" description="In strain: G7.">
    <original>TQ</original>
    <variation>NR</variation>
    <location>
        <begin position="39"/>
        <end position="40"/>
    </location>
</feature>
<feature type="sequence variant" description="In strain: G7.">
    <original>V</original>
    <variation>I</variation>
    <location>
        <position position="99"/>
    </location>
</feature>
<feature type="sequence variant" description="In strain: G7.">
    <original>G</original>
    <variation>S</variation>
    <location>
        <position position="109"/>
    </location>
</feature>
<feature type="sequence variant" description="In strain: G7.">
    <original>M</original>
    <variation>R</variation>
    <location>
        <position position="127"/>
    </location>
</feature>
<feature type="sequence variant" description="In strain: G7.">
    <original>N</original>
    <variation>D</variation>
    <location>
        <position position="130"/>
    </location>
</feature>
<feature type="sequence variant" description="In strain: G7.">
    <original>K</original>
    <variation>E</variation>
    <location>
        <position position="132"/>
    </location>
</feature>
<feature type="turn" evidence="13">
    <location>
        <begin position="5"/>
        <end position="7"/>
    </location>
</feature>
<feature type="helix" evidence="13">
    <location>
        <begin position="13"/>
        <end position="23"/>
    </location>
</feature>
<feature type="helix" evidence="13">
    <location>
        <begin position="28"/>
        <end position="46"/>
    </location>
</feature>
<feature type="helix" evidence="13">
    <location>
        <begin position="50"/>
        <end position="57"/>
    </location>
</feature>
<feature type="strand" evidence="13">
    <location>
        <begin position="58"/>
        <end position="69"/>
    </location>
</feature>
<feature type="strand" evidence="13">
    <location>
        <begin position="84"/>
        <end position="90"/>
    </location>
</feature>
<feature type="helix" evidence="13">
    <location>
        <begin position="92"/>
        <end position="103"/>
    </location>
</feature>
<feature type="helix" evidence="13">
    <location>
        <begin position="108"/>
        <end position="110"/>
    </location>
</feature>
<feature type="strand" evidence="13">
    <location>
        <begin position="115"/>
        <end position="127"/>
    </location>
</feature>
<feature type="strand" evidence="13">
    <location>
        <begin position="134"/>
        <end position="147"/>
    </location>
</feature>
<feature type="turn" evidence="13">
    <location>
        <begin position="148"/>
        <end position="150"/>
    </location>
</feature>
<feature type="strand" evidence="13">
    <location>
        <begin position="151"/>
        <end position="167"/>
    </location>
</feature>
<feature type="strand" evidence="13">
    <location>
        <begin position="170"/>
        <end position="179"/>
    </location>
</feature>
<feature type="strand" evidence="13">
    <location>
        <begin position="183"/>
        <end position="185"/>
    </location>
</feature>
<name>NDOC_PSEPU</name>
<geneLocation type="plasmid">
    <name>pDTG1</name>
</geneLocation>
<geneLocation type="plasmid">
    <name>NAH7</name>
</geneLocation>
<comment type="function">
    <text evidence="1 4">Component of the naphthalene dioxygenase (NDO) multicomponent enzyme system which catalyzes the incorporation of both atoms of molecular oxygen into naphthalene to form cis-(1R,2S)-dihydroxy-1,2-dihydronaphthalene. The beta subunit seems to have a structural role in the holoenzyme. Also able to catalyze the cis-dihydroxylation of biphenyl and phenanthrene (PubMed:10692370).</text>
</comment>
<comment type="pathway">
    <text evidence="11">Aromatic compound metabolism; naphthalene degradation.</text>
</comment>
<comment type="subunit">
    <text evidence="2 3 5 12">The naphthalene dioxygenase (NDO) multicomponent enzyme system is composed of an electron transfer component and a dioxygenase component (iron sulfur protein (ISP)). The electron transfer component is composed of a ferredoxin reductase (NdoR) and a ferredoxin (NdoA), and the dioxygenase component is formed of a heterohexamer (trimer of heterodimers) of three large alpha subunits (NdoB) and three small beta subunits (NdoC).</text>
</comment>
<comment type="interaction">
    <interactant intactId="EBI-1029028">
        <id>P0A112</id>
    </interactant>
    <interactant intactId="EBI-1029015">
        <id>P0A110</id>
        <label>ndoB</label>
    </interactant>
    <organismsDiffer>false</organismsDiffer>
    <experiments>7</experiments>
</comment>
<comment type="similarity">
    <text evidence="10">Belongs to the bacterial ring-hydroxylating dioxygenase beta subunit family.</text>
</comment>
<dbReference type="EMBL" id="M23914">
    <property type="protein sequence ID" value="AAB47592.1"/>
    <property type="molecule type" value="Genomic_DNA"/>
</dbReference>
<dbReference type="EMBL" id="U49496">
    <property type="protein sequence ID" value="AAA92142.1"/>
    <property type="molecule type" value="Genomic_DNA"/>
</dbReference>
<dbReference type="EMBL" id="M83949">
    <property type="protein sequence ID" value="AAA25903.1"/>
    <property type="molecule type" value="Genomic_DNA"/>
</dbReference>
<dbReference type="PIR" id="JN0645">
    <property type="entry name" value="JN0645"/>
</dbReference>
<dbReference type="PIR" id="JS0072">
    <property type="entry name" value="JS0072"/>
</dbReference>
<dbReference type="RefSeq" id="NP_863073.1">
    <property type="nucleotide sequence ID" value="NC_004999.1"/>
</dbReference>
<dbReference type="RefSeq" id="WP_011117401.1">
    <property type="nucleotide sequence ID" value="NZ_CP059053.1"/>
</dbReference>
<dbReference type="RefSeq" id="YP_534823.1">
    <property type="nucleotide sequence ID" value="NC_007926.1"/>
</dbReference>
<dbReference type="PDB" id="1EG9">
    <property type="method" value="X-ray"/>
    <property type="resolution" value="1.60 A"/>
    <property type="chains" value="B=1-194"/>
</dbReference>
<dbReference type="PDB" id="1NDO">
    <property type="method" value="X-ray"/>
    <property type="resolution" value="2.25 A"/>
    <property type="chains" value="B/D/F=1-194"/>
</dbReference>
<dbReference type="PDB" id="1O7G">
    <property type="method" value="X-ray"/>
    <property type="resolution" value="1.70 A"/>
    <property type="chains" value="B=1-194"/>
</dbReference>
<dbReference type="PDB" id="1O7H">
    <property type="method" value="X-ray"/>
    <property type="resolution" value="2.20 A"/>
    <property type="chains" value="B=1-194"/>
</dbReference>
<dbReference type="PDB" id="1O7M">
    <property type="method" value="X-ray"/>
    <property type="resolution" value="1.75 A"/>
    <property type="chains" value="B=1-194"/>
</dbReference>
<dbReference type="PDB" id="1O7N">
    <property type="method" value="X-ray"/>
    <property type="resolution" value="1.40 A"/>
    <property type="chains" value="B=1-194"/>
</dbReference>
<dbReference type="PDB" id="1O7P">
    <property type="method" value="X-ray"/>
    <property type="resolution" value="1.95 A"/>
    <property type="chains" value="B=1-194"/>
</dbReference>
<dbReference type="PDB" id="1O7W">
    <property type="method" value="X-ray"/>
    <property type="resolution" value="1.90 A"/>
    <property type="chains" value="B=1-194"/>
</dbReference>
<dbReference type="PDB" id="1UUV">
    <property type="method" value="X-ray"/>
    <property type="resolution" value="1.65 A"/>
    <property type="chains" value="B=1-194"/>
</dbReference>
<dbReference type="PDB" id="1UUW">
    <property type="method" value="X-ray"/>
    <property type="resolution" value="2.30 A"/>
    <property type="chains" value="B=1-194"/>
</dbReference>
<dbReference type="PDBsum" id="1EG9"/>
<dbReference type="PDBsum" id="1NDO"/>
<dbReference type="PDBsum" id="1O7G"/>
<dbReference type="PDBsum" id="1O7H"/>
<dbReference type="PDBsum" id="1O7M"/>
<dbReference type="PDBsum" id="1O7N"/>
<dbReference type="PDBsum" id="1O7P"/>
<dbReference type="PDBsum" id="1O7W"/>
<dbReference type="PDBsum" id="1UUV"/>
<dbReference type="PDBsum" id="1UUW"/>
<dbReference type="SMR" id="P0A112"/>
<dbReference type="IntAct" id="P0A112">
    <property type="interactions" value="1"/>
</dbReference>
<dbReference type="DrugBank" id="DB08264">
    <property type="generic name" value="(1R, 2S)-cis 1,2 dihydroxy-1,2-dihydronaphthalene"/>
</dbReference>
<dbReference type="BioCyc" id="MetaCyc:MONOMER-12803"/>
<dbReference type="BRENDA" id="1.14.12.12">
    <property type="organism ID" value="5092"/>
</dbReference>
<dbReference type="UniPathway" id="UPA00082"/>
<dbReference type="EvolutionaryTrace" id="P0A112"/>
<dbReference type="GO" id="GO:0051213">
    <property type="term" value="F:dioxygenase activity"/>
    <property type="evidence" value="ECO:0007669"/>
    <property type="project" value="UniProtKB-KW"/>
</dbReference>
<dbReference type="GO" id="GO:0019380">
    <property type="term" value="P:3-phenylpropionate catabolic process"/>
    <property type="evidence" value="ECO:0007669"/>
    <property type="project" value="TreeGrafter"/>
</dbReference>
<dbReference type="CDD" id="cd00667">
    <property type="entry name" value="ring_hydroxylating_dioxygenases_beta"/>
    <property type="match status" value="1"/>
</dbReference>
<dbReference type="Gene3D" id="3.10.450.50">
    <property type="match status" value="1"/>
</dbReference>
<dbReference type="InterPro" id="IPR032710">
    <property type="entry name" value="NTF2-like_dom_sf"/>
</dbReference>
<dbReference type="InterPro" id="IPR000391">
    <property type="entry name" value="Rng_hydr_dOase-bsu"/>
</dbReference>
<dbReference type="PANTHER" id="PTHR41534:SF2">
    <property type="entry name" value="3-PHENYLPROPIONATE_CINNAMIC ACID DIOXYGENASE SUBUNIT BETA"/>
    <property type="match status" value="1"/>
</dbReference>
<dbReference type="PANTHER" id="PTHR41534">
    <property type="entry name" value="BLR3401 PROTEIN"/>
    <property type="match status" value="1"/>
</dbReference>
<dbReference type="Pfam" id="PF00866">
    <property type="entry name" value="Ring_hydroxyl_B"/>
    <property type="match status" value="1"/>
</dbReference>
<dbReference type="SUPFAM" id="SSF54427">
    <property type="entry name" value="NTF2-like"/>
    <property type="match status" value="1"/>
</dbReference>
<protein>
    <recommendedName>
        <fullName evidence="10">Naphthalene 1,2-dioxygenase system, small oxygenase component</fullName>
    </recommendedName>
    <alternativeName>
        <fullName evidence="7">Naphthalene 1,2-dioxygenase ISP beta</fullName>
    </alternativeName>
    <alternativeName>
        <fullName evidence="7">Naphthalene 1,2-dioxygenase subunit beta</fullName>
        <shortName evidence="6">ND subunit beta</shortName>
        <shortName evidence="9">NDO subunit beta</shortName>
    </alternativeName>
</protein>
<evidence type="ECO:0000269" key="1">
    <source>
    </source>
</evidence>
<evidence type="ECO:0000269" key="2">
    <source>
    </source>
</evidence>
<evidence type="ECO:0000269" key="3">
    <source>
    </source>
</evidence>
<evidence type="ECO:0000269" key="4">
    <source>
    </source>
</evidence>
<evidence type="ECO:0000269" key="5">
    <source>
    </source>
</evidence>
<evidence type="ECO:0000303" key="6">
    <source>
    </source>
</evidence>
<evidence type="ECO:0000303" key="7">
    <source>
    </source>
</evidence>
<evidence type="ECO:0000303" key="8">
    <source>
    </source>
</evidence>
<evidence type="ECO:0000303" key="9">
    <source>
    </source>
</evidence>
<evidence type="ECO:0000305" key="10"/>
<evidence type="ECO:0000305" key="11">
    <source>
    </source>
</evidence>
<evidence type="ECO:0000305" key="12">
    <source>
    </source>
</evidence>
<evidence type="ECO:0007829" key="13">
    <source>
        <dbReference type="PDB" id="1O7N"/>
    </source>
</evidence>
<sequence>MMINIQEDKLVSAHDAEEILRFFNCHDSALQQEATTLLTQEAHLLDIQAYRAWLEHCVGSEVQYQVISRELRAASERRYKLNEAMNVYNENFQQLKVRVEHQLDPQNWGNSPKLRFTRFITNVQAAMDVNDKELLHIRSNVILHRARRGNQVDVFYAAREDKWKRGEGGVRKLVQRFVDYPERILQTHNLMVFL</sequence>
<reference key="1">
    <citation type="journal article" date="1988" name="Gene">
        <title>Cloning, nucleotide sequence and characterization of genes encoding naphthalene dioxygenase of Pseudomonas putida strain NCIB9816.</title>
        <authorList>
            <person name="Kurkela S."/>
            <person name="Lehvaeslaiho H."/>
            <person name="Palva E.T."/>
            <person name="Teeri T.H."/>
        </authorList>
    </citation>
    <scope>NUCLEOTIDE SEQUENCE [GENOMIC DNA]</scope>
    <source>
        <strain>DSM 8368 / NCIMB 9816 / PG</strain>
    </source>
</reference>
<reference key="2">
    <citation type="journal article" date="1996" name="Gene">
        <title>Cloning and sequencing of the genes encoding 2-nitrotoluene dioxygenase from Pseudomonas sp. JS42.</title>
        <authorList>
            <person name="Parales J.V."/>
            <person name="Kumar A."/>
            <person name="Parales R.E."/>
            <person name="Gibson D.T."/>
        </authorList>
    </citation>
    <scope>NUCLEOTIDE SEQUENCE [GENOMIC DNA]</scope>
    <source>
        <strain>NCIMB 9816-4</strain>
        <plasmid>pDTG1</plasmid>
    </source>
</reference>
<reference key="3">
    <citation type="journal article" date="1993" name="Gene">
        <title>Sequences of genes encoding naphthalene dioxygenase in Pseudomonas putida strains G7 and NCIB 9816-4.</title>
        <authorList>
            <person name="Simon M.J."/>
            <person name="Osslund T.D."/>
            <person name="Saunders R."/>
            <person name="Ensley B.D."/>
            <person name="Suggs S."/>
            <person name="Harcourt A.A."/>
            <person name="Suen W.-C."/>
            <person name="Cruden D.L."/>
            <person name="Gibson D.T."/>
            <person name="Zylstra G.J."/>
        </authorList>
    </citation>
    <scope>NUCLEOTIDE SEQUENCE [GENOMIC DNA]</scope>
    <source>
        <strain>ATCC 17485 / DSM 50208 / JCM 6158 / NCIMB 12092 / Stanier 111 / Biotype A</strain>
        <plasmid>NAH7</plasmid>
    </source>
</reference>
<reference key="4">
    <citation type="journal article" date="1983" name="J. Bacteriol.">
        <title>Naphthalene dioxygenase: purification and properties of a terminal oxygenase component.</title>
        <authorList>
            <person name="Ensley B.D."/>
            <person name="Gibson D.T."/>
        </authorList>
    </citation>
    <scope>FUNCTION</scope>
    <scope>SUBUNIT</scope>
    <source>
        <strain>DSM 8368 / NCIMB 9816 / PG</strain>
    </source>
</reference>
<reference key="5">
    <citation type="journal article" date="2000" name="J. Bacteriol.">
        <title>Substrate specificity of naphthalene dioxygenase: effect of specific amino acids at the active site of the enzyme.</title>
        <authorList>
            <person name="Parales R.E."/>
            <person name="Lee K."/>
            <person name="Resnick S.M."/>
            <person name="Jiang H."/>
            <person name="Lessner D.J."/>
            <person name="Gibson D.T."/>
        </authorList>
    </citation>
    <scope>FUNCTION</scope>
    <scope>SUBSTRATE SPECIFICITY</scope>
    <scope>PATHWAY</scope>
    <source>
        <strain>NCIMB 9816-4</strain>
    </source>
</reference>
<reference key="6">
    <citation type="journal article" date="1998" name="Structure">
        <title>Structure of an aromatic-ring-hydroxylating dioxygenase-naphthalene 1,2-dioxygenase.</title>
        <authorList>
            <person name="Kauppi B."/>
            <person name="Lee K."/>
            <person name="Carredano E."/>
            <person name="Parales R.E."/>
            <person name="Gibson D.T."/>
            <person name="Eklund H."/>
            <person name="Ramaswamy S."/>
        </authorList>
    </citation>
    <scope>X-RAY CRYSTALLOGRAPHY (2.25 ANGSTROMS)</scope>
    <scope>SUBUNIT</scope>
    <source>
        <strain>NCIMB 9816-4</strain>
    </source>
</reference>
<reference key="7">
    <citation type="journal article" date="2000" name="J. Mol. Biol.">
        <title>Substrate binding site of naphthalene 1,2-dioxygenase: functional implications of indole binding.</title>
        <authorList>
            <person name="Carredano E."/>
            <person name="Karlsson A."/>
            <person name="Kauppi B."/>
            <person name="Choudhury D."/>
            <person name="Parales R.E."/>
            <person name="Parales J.V."/>
            <person name="Lee K."/>
            <person name="Gibson D.T."/>
            <person name="Eklund H."/>
            <person name="Ramaswamy S."/>
        </authorList>
    </citation>
    <scope>X-RAY CRYSTALLOGRAPHY (1.60 ANGSTROMS)</scope>
    <source>
        <strain>NCIMB 9816-4</strain>
    </source>
</reference>
<reference key="8">
    <citation type="journal article" date="2003" name="Science">
        <title>Crystal structure of naphthalene dioxygenase: side-on binding of dioxygen to iron.</title>
        <authorList>
            <person name="Karlsson A."/>
            <person name="Parales J.V."/>
            <person name="Parales R.E."/>
            <person name="Gibson D.T."/>
            <person name="Eklund H."/>
            <person name="Ramaswamy S."/>
        </authorList>
    </citation>
    <scope>X-RAY CRYSTALLOGRAPHY (1.40 ANGSTROMS)</scope>
    <scope>SUBUNIT</scope>
</reference>
<reference key="9">
    <citation type="journal article" date="2005" name="J. Biol. Inorg. Chem.">
        <title>NO binding to naphthalene dioxygenase.</title>
        <authorList>
            <person name="Karlsson A."/>
            <person name="Parales J.V."/>
            <person name="Parales R.E."/>
            <person name="Gibson D.T."/>
            <person name="Eklund H."/>
            <person name="Ramaswamy S."/>
        </authorList>
    </citation>
    <scope>X-RAY CRYSTALLOGRAPHY (1.65 ANGSTROMS)</scope>
    <scope>SUBUNIT</scope>
</reference>
<keyword id="KW-0002">3D-structure</keyword>
<keyword id="KW-0058">Aromatic hydrocarbons catabolism</keyword>
<keyword id="KW-0223">Dioxygenase</keyword>
<keyword id="KW-0560">Oxidoreductase</keyword>
<keyword id="KW-0614">Plasmid</keyword>
<proteinExistence type="evidence at protein level"/>
<organism>
    <name type="scientific">Pseudomonas putida</name>
    <name type="common">Arthrobacter siderocapsulatus</name>
    <dbReference type="NCBI Taxonomy" id="303"/>
    <lineage>
        <taxon>Bacteria</taxon>
        <taxon>Pseudomonadati</taxon>
        <taxon>Pseudomonadota</taxon>
        <taxon>Gammaproteobacteria</taxon>
        <taxon>Pseudomonadales</taxon>
        <taxon>Pseudomonadaceae</taxon>
        <taxon>Pseudomonas</taxon>
    </lineage>
</organism>
<accession>P0A112</accession>
<accession>P23095</accession>
<accession>Q52125</accession>